<accession>Q4UNJ4</accession>
<name>DUS_RICFE</name>
<reference key="1">
    <citation type="journal article" date="2005" name="PLoS Biol.">
        <title>The genome sequence of Rickettsia felis identifies the first putative conjugative plasmid in an obligate intracellular parasite.</title>
        <authorList>
            <person name="Ogata H."/>
            <person name="Renesto P."/>
            <person name="Audic S."/>
            <person name="Robert C."/>
            <person name="Blanc G."/>
            <person name="Fournier P.-E."/>
            <person name="Parinello H."/>
            <person name="Claverie J.-M."/>
            <person name="Raoult D."/>
        </authorList>
    </citation>
    <scope>NUCLEOTIDE SEQUENCE [LARGE SCALE GENOMIC DNA]</scope>
    <source>
        <strain>ATCC VR-1525 / URRWXCal2</strain>
    </source>
</reference>
<proteinExistence type="inferred from homology"/>
<evidence type="ECO:0000250" key="1">
    <source>
        <dbReference type="UniProtKB" id="P33371"/>
    </source>
</evidence>
<evidence type="ECO:0000250" key="2">
    <source>
        <dbReference type="UniProtKB" id="Q5SMC7"/>
    </source>
</evidence>
<evidence type="ECO:0000305" key="3"/>
<sequence>MIKIGDIELSSNVILAPMSDITDLEFRKLVKRFGAGLVVSEMIASRAMVVKSRQSMQKCAIVHDDPTSACVQLAGCEPNVIAEAAKMNEDMGAKIIDLNFGCPAKKVVGGYAGSALMRDEQLAAKIFEATVKAVKIPITVKMRMGWDDNTKNAPDLAKIAESSGVQMVTVHGRTRCQFYSGNADWDFIRSVKEAVKIPVIANGDITNFAKAKEALQKSGADGIMVGRGAYGKPWLVSQIAHYLKTGEEKPAPSIAEQLDIVTEHYNAILDYYGESVGVPIARKHIGWYSSGLPSSAEFRGAVNLMNDPAEVKEKIAEFYTSVMKE</sequence>
<comment type="function">
    <text evidence="1">Catalyzes the synthesis of 5,6-dihydrouridine (D), a modified base found in the D-loop of most tRNAs, via the reduction of the C5-C6 double bond in target uridines.</text>
</comment>
<comment type="catalytic activity">
    <reaction evidence="1">
        <text>a 5,6-dihydrouridine in tRNA + NAD(+) = a uridine in tRNA + NADH + H(+)</text>
        <dbReference type="Rhea" id="RHEA:54452"/>
        <dbReference type="Rhea" id="RHEA-COMP:13339"/>
        <dbReference type="Rhea" id="RHEA-COMP:13887"/>
        <dbReference type="ChEBI" id="CHEBI:15378"/>
        <dbReference type="ChEBI" id="CHEBI:57540"/>
        <dbReference type="ChEBI" id="CHEBI:57945"/>
        <dbReference type="ChEBI" id="CHEBI:65315"/>
        <dbReference type="ChEBI" id="CHEBI:74443"/>
    </reaction>
</comment>
<comment type="catalytic activity">
    <reaction evidence="1">
        <text>a 5,6-dihydrouridine in tRNA + NADP(+) = a uridine in tRNA + NADPH + H(+)</text>
        <dbReference type="Rhea" id="RHEA:23624"/>
        <dbReference type="Rhea" id="RHEA-COMP:13339"/>
        <dbReference type="Rhea" id="RHEA-COMP:13887"/>
        <dbReference type="ChEBI" id="CHEBI:15378"/>
        <dbReference type="ChEBI" id="CHEBI:57783"/>
        <dbReference type="ChEBI" id="CHEBI:58349"/>
        <dbReference type="ChEBI" id="CHEBI:65315"/>
        <dbReference type="ChEBI" id="CHEBI:74443"/>
    </reaction>
</comment>
<comment type="cofactor">
    <cofactor evidence="1">
        <name>FMN</name>
        <dbReference type="ChEBI" id="CHEBI:58210"/>
    </cofactor>
</comment>
<comment type="similarity">
    <text evidence="3">Belongs to the Dus family.</text>
</comment>
<dbReference type="EC" id="1.3.1.-"/>
<dbReference type="EMBL" id="CP000053">
    <property type="protein sequence ID" value="AAY60863.1"/>
    <property type="molecule type" value="Genomic_DNA"/>
</dbReference>
<dbReference type="SMR" id="Q4UNJ4"/>
<dbReference type="STRING" id="315456.RF_0012"/>
<dbReference type="KEGG" id="rfe:RF_0012"/>
<dbReference type="eggNOG" id="COG0042">
    <property type="taxonomic scope" value="Bacteria"/>
</dbReference>
<dbReference type="HOGENOM" id="CLU_013299_0_3_5"/>
<dbReference type="OrthoDB" id="9764501at2"/>
<dbReference type="Proteomes" id="UP000008548">
    <property type="component" value="Chromosome"/>
</dbReference>
<dbReference type="GO" id="GO:0050660">
    <property type="term" value="F:flavin adenine dinucleotide binding"/>
    <property type="evidence" value="ECO:0007669"/>
    <property type="project" value="InterPro"/>
</dbReference>
<dbReference type="GO" id="GO:0000049">
    <property type="term" value="F:tRNA binding"/>
    <property type="evidence" value="ECO:0007669"/>
    <property type="project" value="UniProtKB-KW"/>
</dbReference>
<dbReference type="GO" id="GO:0017150">
    <property type="term" value="F:tRNA dihydrouridine synthase activity"/>
    <property type="evidence" value="ECO:0007669"/>
    <property type="project" value="InterPro"/>
</dbReference>
<dbReference type="CDD" id="cd02801">
    <property type="entry name" value="DUS_like_FMN"/>
    <property type="match status" value="1"/>
</dbReference>
<dbReference type="Gene3D" id="3.20.20.70">
    <property type="entry name" value="Aldolase class I"/>
    <property type="match status" value="1"/>
</dbReference>
<dbReference type="Gene3D" id="1.10.1200.80">
    <property type="entry name" value="Putative flavin oxidoreducatase, domain 2"/>
    <property type="match status" value="1"/>
</dbReference>
<dbReference type="InterPro" id="IPR013785">
    <property type="entry name" value="Aldolase_TIM"/>
</dbReference>
<dbReference type="InterPro" id="IPR035587">
    <property type="entry name" value="DUS-like_FMN-bd"/>
</dbReference>
<dbReference type="InterPro" id="IPR001269">
    <property type="entry name" value="DUS_fam"/>
</dbReference>
<dbReference type="InterPro" id="IPR004652">
    <property type="entry name" value="DusB-like"/>
</dbReference>
<dbReference type="InterPro" id="IPR024036">
    <property type="entry name" value="tRNA-dHydroUridine_Synthase_C"/>
</dbReference>
<dbReference type="InterPro" id="IPR018517">
    <property type="entry name" value="tRNA_hU_synthase_CS"/>
</dbReference>
<dbReference type="NCBIfam" id="TIGR00737">
    <property type="entry name" value="nifR3_yhdG"/>
    <property type="match status" value="1"/>
</dbReference>
<dbReference type="PANTHER" id="PTHR45846">
    <property type="entry name" value="TRNA-DIHYDROURIDINE(47) SYNTHASE [NAD(P)(+)]-LIKE"/>
    <property type="match status" value="1"/>
</dbReference>
<dbReference type="PANTHER" id="PTHR45846:SF1">
    <property type="entry name" value="TRNA-DIHYDROURIDINE(47) SYNTHASE [NAD(P)(+)]-LIKE"/>
    <property type="match status" value="1"/>
</dbReference>
<dbReference type="Pfam" id="PF01207">
    <property type="entry name" value="Dus"/>
    <property type="match status" value="1"/>
</dbReference>
<dbReference type="PIRSF" id="PIRSF006621">
    <property type="entry name" value="Dus"/>
    <property type="match status" value="1"/>
</dbReference>
<dbReference type="SUPFAM" id="SSF51395">
    <property type="entry name" value="FMN-linked oxidoreductases"/>
    <property type="match status" value="1"/>
</dbReference>
<dbReference type="PROSITE" id="PS01136">
    <property type="entry name" value="UPF0034"/>
    <property type="match status" value="1"/>
</dbReference>
<protein>
    <recommendedName>
        <fullName>Probable tRNA-dihydrouridine synthase</fullName>
        <ecNumber>1.3.1.-</ecNumber>
    </recommendedName>
</protein>
<feature type="chain" id="PRO_0000280960" description="Probable tRNA-dihydrouridine synthase">
    <location>
        <begin position="1"/>
        <end position="325"/>
    </location>
</feature>
<feature type="active site" description="Proton donor" evidence="2">
    <location>
        <position position="102"/>
    </location>
</feature>
<feature type="binding site" evidence="1">
    <location>
        <begin position="17"/>
        <end position="19"/>
    </location>
    <ligand>
        <name>FMN</name>
        <dbReference type="ChEBI" id="CHEBI:58210"/>
    </ligand>
</feature>
<feature type="binding site" evidence="1">
    <location>
        <position position="72"/>
    </location>
    <ligand>
        <name>FMN</name>
        <dbReference type="ChEBI" id="CHEBI:58210"/>
    </ligand>
</feature>
<feature type="binding site" evidence="1">
    <location>
        <position position="141"/>
    </location>
    <ligand>
        <name>FMN</name>
        <dbReference type="ChEBI" id="CHEBI:58210"/>
    </ligand>
</feature>
<feature type="binding site" evidence="1">
    <location>
        <begin position="202"/>
        <end position="204"/>
    </location>
    <ligand>
        <name>FMN</name>
        <dbReference type="ChEBI" id="CHEBI:58210"/>
    </ligand>
</feature>
<feature type="binding site" evidence="1">
    <location>
        <begin position="226"/>
        <end position="227"/>
    </location>
    <ligand>
        <name>FMN</name>
        <dbReference type="ChEBI" id="CHEBI:58210"/>
    </ligand>
</feature>
<keyword id="KW-0285">Flavoprotein</keyword>
<keyword id="KW-0288">FMN</keyword>
<keyword id="KW-0521">NADP</keyword>
<keyword id="KW-0560">Oxidoreductase</keyword>
<keyword id="KW-0694">RNA-binding</keyword>
<keyword id="KW-0819">tRNA processing</keyword>
<keyword id="KW-0820">tRNA-binding</keyword>
<gene>
    <name type="primary">dus</name>
    <name type="ordered locus">RF_0012</name>
</gene>
<organism>
    <name type="scientific">Rickettsia felis (strain ATCC VR-1525 / URRWXCal2)</name>
    <name type="common">Rickettsia azadi</name>
    <dbReference type="NCBI Taxonomy" id="315456"/>
    <lineage>
        <taxon>Bacteria</taxon>
        <taxon>Pseudomonadati</taxon>
        <taxon>Pseudomonadota</taxon>
        <taxon>Alphaproteobacteria</taxon>
        <taxon>Rickettsiales</taxon>
        <taxon>Rickettsiaceae</taxon>
        <taxon>Rickettsieae</taxon>
        <taxon>Rickettsia</taxon>
        <taxon>spotted fever group</taxon>
    </lineage>
</organism>